<sequence>MEIKVTEIRENKLLGRKEIYFDIIHEGEPTPSREAVKGKLAAMLDLDPNTMVLQYIRSYFGSHVSKGYAKAYETRERMLYIEPEYILLRDGLIQKEEE</sequence>
<feature type="chain" id="PRO_1000211965" description="Small ribosomal subunit protein eS24">
    <location>
        <begin position="1"/>
        <end position="98"/>
    </location>
</feature>
<protein>
    <recommendedName>
        <fullName evidence="1">Small ribosomal subunit protein eS24</fullName>
    </recommendedName>
    <alternativeName>
        <fullName evidence="2">30S ribosomal protein S24e</fullName>
    </alternativeName>
</protein>
<evidence type="ECO:0000255" key="1">
    <source>
        <dbReference type="HAMAP-Rule" id="MF_00545"/>
    </source>
</evidence>
<evidence type="ECO:0000305" key="2"/>
<comment type="similarity">
    <text evidence="1">Belongs to the eukaryotic ribosomal protein eS24 family.</text>
</comment>
<gene>
    <name evidence="1" type="primary">rps24e</name>
    <name type="ordered locus">TGAM_0502</name>
</gene>
<proteinExistence type="inferred from homology"/>
<dbReference type="EMBL" id="CP001398">
    <property type="protein sequence ID" value="ACS33004.1"/>
    <property type="molecule type" value="Genomic_DNA"/>
</dbReference>
<dbReference type="RefSeq" id="WP_015858122.1">
    <property type="nucleotide sequence ID" value="NC_012804.1"/>
</dbReference>
<dbReference type="SMR" id="C5A442"/>
<dbReference type="STRING" id="593117.TGAM_0502"/>
<dbReference type="PaxDb" id="593117-TGAM_0502"/>
<dbReference type="GeneID" id="27135301"/>
<dbReference type="GeneID" id="7987370"/>
<dbReference type="KEGG" id="tga:TGAM_0502"/>
<dbReference type="PATRIC" id="fig|593117.10.peg.497"/>
<dbReference type="eggNOG" id="arCOG04182">
    <property type="taxonomic scope" value="Archaea"/>
</dbReference>
<dbReference type="HOGENOM" id="CLU_107248_3_2_2"/>
<dbReference type="OrthoDB" id="27533at2157"/>
<dbReference type="Proteomes" id="UP000001488">
    <property type="component" value="Chromosome"/>
</dbReference>
<dbReference type="GO" id="GO:1990904">
    <property type="term" value="C:ribonucleoprotein complex"/>
    <property type="evidence" value="ECO:0007669"/>
    <property type="project" value="UniProtKB-KW"/>
</dbReference>
<dbReference type="GO" id="GO:0005840">
    <property type="term" value="C:ribosome"/>
    <property type="evidence" value="ECO:0007669"/>
    <property type="project" value="UniProtKB-KW"/>
</dbReference>
<dbReference type="GO" id="GO:0003735">
    <property type="term" value="F:structural constituent of ribosome"/>
    <property type="evidence" value="ECO:0007669"/>
    <property type="project" value="InterPro"/>
</dbReference>
<dbReference type="GO" id="GO:0006412">
    <property type="term" value="P:translation"/>
    <property type="evidence" value="ECO:0007669"/>
    <property type="project" value="UniProtKB-UniRule"/>
</dbReference>
<dbReference type="Gene3D" id="3.30.70.330">
    <property type="match status" value="1"/>
</dbReference>
<dbReference type="HAMAP" id="MF_00545">
    <property type="entry name" value="Ribosomal_eS24"/>
    <property type="match status" value="1"/>
</dbReference>
<dbReference type="InterPro" id="IPR012677">
    <property type="entry name" value="Nucleotide-bd_a/b_plait_sf"/>
</dbReference>
<dbReference type="InterPro" id="IPR001976">
    <property type="entry name" value="Ribosomal_eS24"/>
</dbReference>
<dbReference type="InterPro" id="IPR018098">
    <property type="entry name" value="Ribosomal_eS24_CS"/>
</dbReference>
<dbReference type="InterPro" id="IPR012678">
    <property type="entry name" value="Ribosomal_uL23/eL15/eS24_sf"/>
</dbReference>
<dbReference type="PANTHER" id="PTHR10496">
    <property type="entry name" value="40S RIBOSOMAL PROTEIN S24"/>
    <property type="match status" value="1"/>
</dbReference>
<dbReference type="Pfam" id="PF01282">
    <property type="entry name" value="Ribosomal_S24e"/>
    <property type="match status" value="1"/>
</dbReference>
<dbReference type="SUPFAM" id="SSF54189">
    <property type="entry name" value="Ribosomal proteins S24e, L23 and L15e"/>
    <property type="match status" value="1"/>
</dbReference>
<dbReference type="PROSITE" id="PS00529">
    <property type="entry name" value="RIBOSOMAL_S24E"/>
    <property type="match status" value="1"/>
</dbReference>
<name>RS24_THEGJ</name>
<organism>
    <name type="scientific">Thermococcus gammatolerans (strain DSM 15229 / JCM 11827 / EJ3)</name>
    <dbReference type="NCBI Taxonomy" id="593117"/>
    <lineage>
        <taxon>Archaea</taxon>
        <taxon>Methanobacteriati</taxon>
        <taxon>Methanobacteriota</taxon>
        <taxon>Thermococci</taxon>
        <taxon>Thermococcales</taxon>
        <taxon>Thermococcaceae</taxon>
        <taxon>Thermococcus</taxon>
    </lineage>
</organism>
<reference key="1">
    <citation type="journal article" date="2007" name="Genome Biol.">
        <title>Genome analysis and genome-wide proteomics of Thermococcus gammatolerans, the most radioresistant organism known amongst the Archaea.</title>
        <authorList>
            <person name="Zivanovic Y."/>
            <person name="Armengaud J."/>
            <person name="Lagorce A."/>
            <person name="Leplat C."/>
            <person name="Guerin P."/>
            <person name="Dutertre M."/>
            <person name="Anthouard V."/>
            <person name="Forterre P."/>
            <person name="Wincker P."/>
            <person name="Confalonieri F."/>
        </authorList>
    </citation>
    <scope>NUCLEOTIDE SEQUENCE [LARGE SCALE GENOMIC DNA]</scope>
    <source>
        <strain>DSM 15229 / JCM 11827 / EJ3</strain>
    </source>
</reference>
<keyword id="KW-1185">Reference proteome</keyword>
<keyword id="KW-0687">Ribonucleoprotein</keyword>
<keyword id="KW-0689">Ribosomal protein</keyword>
<accession>C5A442</accession>